<keyword id="KW-0031">Aminopeptidase</keyword>
<keyword id="KW-0963">Cytoplasm</keyword>
<keyword id="KW-0378">Hydrolase</keyword>
<keyword id="KW-0464">Manganese</keyword>
<keyword id="KW-0479">Metal-binding</keyword>
<keyword id="KW-0645">Protease</keyword>
<keyword id="KW-1185">Reference proteome</keyword>
<reference key="1">
    <citation type="submission" date="2007-03" db="EMBL/GenBank/DDBJ databases">
        <title>Complete sequence of Shewanella loihica PV-4.</title>
        <authorList>
            <consortium name="US DOE Joint Genome Institute"/>
            <person name="Copeland A."/>
            <person name="Lucas S."/>
            <person name="Lapidus A."/>
            <person name="Barry K."/>
            <person name="Detter J.C."/>
            <person name="Glavina del Rio T."/>
            <person name="Hammon N."/>
            <person name="Israni S."/>
            <person name="Dalin E."/>
            <person name="Tice H."/>
            <person name="Pitluck S."/>
            <person name="Chain P."/>
            <person name="Malfatti S."/>
            <person name="Shin M."/>
            <person name="Vergez L."/>
            <person name="Schmutz J."/>
            <person name="Larimer F."/>
            <person name="Land M."/>
            <person name="Hauser L."/>
            <person name="Kyrpides N."/>
            <person name="Mikhailova N."/>
            <person name="Romine M.F."/>
            <person name="Serres G."/>
            <person name="Fredrickson J."/>
            <person name="Tiedje J."/>
            <person name="Richardson P."/>
        </authorList>
    </citation>
    <scope>NUCLEOTIDE SEQUENCE [LARGE SCALE GENOMIC DNA]</scope>
    <source>
        <strain>ATCC BAA-1088 / PV-4</strain>
    </source>
</reference>
<evidence type="ECO:0000255" key="1">
    <source>
        <dbReference type="HAMAP-Rule" id="MF_00181"/>
    </source>
</evidence>
<comment type="function">
    <text evidence="1">Presumably involved in the processing and regular turnover of intracellular proteins. Catalyzes the removal of unsubstituted N-terminal amino acids from various peptides.</text>
</comment>
<comment type="catalytic activity">
    <reaction evidence="1">
        <text>Release of an N-terminal amino acid, Xaa-|-Yaa-, in which Xaa is preferably Leu, but may be other amino acids including Pro although not Arg or Lys, and Yaa may be Pro. Amino acid amides and methyl esters are also readily hydrolyzed, but rates on arylamides are exceedingly low.</text>
        <dbReference type="EC" id="3.4.11.1"/>
    </reaction>
</comment>
<comment type="catalytic activity">
    <reaction evidence="1">
        <text>Release of an N-terminal amino acid, preferentially leucine, but not glutamic or aspartic acids.</text>
        <dbReference type="EC" id="3.4.11.10"/>
    </reaction>
</comment>
<comment type="cofactor">
    <cofactor evidence="1">
        <name>Mn(2+)</name>
        <dbReference type="ChEBI" id="CHEBI:29035"/>
    </cofactor>
    <text evidence="1">Binds 2 manganese ions per subunit.</text>
</comment>
<comment type="subcellular location">
    <subcellularLocation>
        <location evidence="1">Cytoplasm</location>
    </subcellularLocation>
</comment>
<comment type="similarity">
    <text evidence="1">Belongs to the peptidase M17 family.</text>
</comment>
<name>AMPA_SHELP</name>
<protein>
    <recommendedName>
        <fullName evidence="1">Probable cytosol aminopeptidase</fullName>
        <ecNumber evidence="1">3.4.11.1</ecNumber>
    </recommendedName>
    <alternativeName>
        <fullName evidence="1">Leucine aminopeptidase</fullName>
        <shortName evidence="1">LAP</shortName>
        <ecNumber evidence="1">3.4.11.10</ecNumber>
    </alternativeName>
    <alternativeName>
        <fullName evidence="1">Leucyl aminopeptidase</fullName>
    </alternativeName>
</protein>
<organism>
    <name type="scientific">Shewanella loihica (strain ATCC BAA-1088 / PV-4)</name>
    <dbReference type="NCBI Taxonomy" id="323850"/>
    <lineage>
        <taxon>Bacteria</taxon>
        <taxon>Pseudomonadati</taxon>
        <taxon>Pseudomonadota</taxon>
        <taxon>Gammaproteobacteria</taxon>
        <taxon>Alteromonadales</taxon>
        <taxon>Shewanellaceae</taxon>
        <taxon>Shewanella</taxon>
    </lineage>
</organism>
<proteinExistence type="inferred from homology"/>
<dbReference type="EC" id="3.4.11.1" evidence="1"/>
<dbReference type="EC" id="3.4.11.10" evidence="1"/>
<dbReference type="EMBL" id="CP000606">
    <property type="protein sequence ID" value="ABO22810.1"/>
    <property type="molecule type" value="Genomic_DNA"/>
</dbReference>
<dbReference type="RefSeq" id="WP_011864744.1">
    <property type="nucleotide sequence ID" value="NC_009092.1"/>
</dbReference>
<dbReference type="SMR" id="A3QBG2"/>
<dbReference type="STRING" id="323850.Shew_0939"/>
<dbReference type="MEROPS" id="M17.003"/>
<dbReference type="KEGG" id="slo:Shew_0939"/>
<dbReference type="eggNOG" id="COG0260">
    <property type="taxonomic scope" value="Bacteria"/>
</dbReference>
<dbReference type="HOGENOM" id="CLU_013734_2_2_6"/>
<dbReference type="OrthoDB" id="9809354at2"/>
<dbReference type="Proteomes" id="UP000001558">
    <property type="component" value="Chromosome"/>
</dbReference>
<dbReference type="GO" id="GO:0005737">
    <property type="term" value="C:cytoplasm"/>
    <property type="evidence" value="ECO:0007669"/>
    <property type="project" value="UniProtKB-SubCell"/>
</dbReference>
<dbReference type="GO" id="GO:0030145">
    <property type="term" value="F:manganese ion binding"/>
    <property type="evidence" value="ECO:0007669"/>
    <property type="project" value="UniProtKB-UniRule"/>
</dbReference>
<dbReference type="GO" id="GO:0070006">
    <property type="term" value="F:metalloaminopeptidase activity"/>
    <property type="evidence" value="ECO:0007669"/>
    <property type="project" value="InterPro"/>
</dbReference>
<dbReference type="GO" id="GO:0006508">
    <property type="term" value="P:proteolysis"/>
    <property type="evidence" value="ECO:0007669"/>
    <property type="project" value="UniProtKB-KW"/>
</dbReference>
<dbReference type="CDD" id="cd00433">
    <property type="entry name" value="Peptidase_M17"/>
    <property type="match status" value="1"/>
</dbReference>
<dbReference type="FunFam" id="3.40.220.10:FF:000001">
    <property type="entry name" value="Probable cytosol aminopeptidase"/>
    <property type="match status" value="1"/>
</dbReference>
<dbReference type="FunFam" id="3.40.630.10:FF:000004">
    <property type="entry name" value="Probable cytosol aminopeptidase"/>
    <property type="match status" value="1"/>
</dbReference>
<dbReference type="Gene3D" id="3.40.220.10">
    <property type="entry name" value="Leucine Aminopeptidase, subunit E, domain 1"/>
    <property type="match status" value="1"/>
</dbReference>
<dbReference type="Gene3D" id="3.40.630.10">
    <property type="entry name" value="Zn peptidases"/>
    <property type="match status" value="1"/>
</dbReference>
<dbReference type="HAMAP" id="MF_00181">
    <property type="entry name" value="Cytosol_peptidase_M17"/>
    <property type="match status" value="1"/>
</dbReference>
<dbReference type="InterPro" id="IPR011356">
    <property type="entry name" value="Leucine_aapep/pepB"/>
</dbReference>
<dbReference type="InterPro" id="IPR043472">
    <property type="entry name" value="Macro_dom-like"/>
</dbReference>
<dbReference type="InterPro" id="IPR000819">
    <property type="entry name" value="Peptidase_M17_C"/>
</dbReference>
<dbReference type="InterPro" id="IPR023042">
    <property type="entry name" value="Peptidase_M17_leu_NH2_pept"/>
</dbReference>
<dbReference type="InterPro" id="IPR008283">
    <property type="entry name" value="Peptidase_M17_N"/>
</dbReference>
<dbReference type="NCBIfam" id="NF002072">
    <property type="entry name" value="PRK00913.1-1"/>
    <property type="match status" value="1"/>
</dbReference>
<dbReference type="NCBIfam" id="NF002074">
    <property type="entry name" value="PRK00913.1-4"/>
    <property type="match status" value="1"/>
</dbReference>
<dbReference type="PANTHER" id="PTHR11963:SF23">
    <property type="entry name" value="CYTOSOL AMINOPEPTIDASE"/>
    <property type="match status" value="1"/>
</dbReference>
<dbReference type="PANTHER" id="PTHR11963">
    <property type="entry name" value="LEUCINE AMINOPEPTIDASE-RELATED"/>
    <property type="match status" value="1"/>
</dbReference>
<dbReference type="Pfam" id="PF00883">
    <property type="entry name" value="Peptidase_M17"/>
    <property type="match status" value="1"/>
</dbReference>
<dbReference type="Pfam" id="PF02789">
    <property type="entry name" value="Peptidase_M17_N"/>
    <property type="match status" value="1"/>
</dbReference>
<dbReference type="PRINTS" id="PR00481">
    <property type="entry name" value="LAMNOPPTDASE"/>
</dbReference>
<dbReference type="SUPFAM" id="SSF52949">
    <property type="entry name" value="Macro domain-like"/>
    <property type="match status" value="1"/>
</dbReference>
<dbReference type="SUPFAM" id="SSF53187">
    <property type="entry name" value="Zn-dependent exopeptidases"/>
    <property type="match status" value="1"/>
</dbReference>
<dbReference type="PROSITE" id="PS00631">
    <property type="entry name" value="CYTOSOL_AP"/>
    <property type="match status" value="1"/>
</dbReference>
<feature type="chain" id="PRO_1000019979" description="Probable cytosol aminopeptidase">
    <location>
        <begin position="1"/>
        <end position="502"/>
    </location>
</feature>
<feature type="active site" evidence="1">
    <location>
        <position position="281"/>
    </location>
</feature>
<feature type="active site" evidence="1">
    <location>
        <position position="355"/>
    </location>
</feature>
<feature type="binding site" evidence="1">
    <location>
        <position position="269"/>
    </location>
    <ligand>
        <name>Mn(2+)</name>
        <dbReference type="ChEBI" id="CHEBI:29035"/>
        <label>2</label>
    </ligand>
</feature>
<feature type="binding site" evidence="1">
    <location>
        <position position="274"/>
    </location>
    <ligand>
        <name>Mn(2+)</name>
        <dbReference type="ChEBI" id="CHEBI:29035"/>
        <label>1</label>
    </ligand>
</feature>
<feature type="binding site" evidence="1">
    <location>
        <position position="274"/>
    </location>
    <ligand>
        <name>Mn(2+)</name>
        <dbReference type="ChEBI" id="CHEBI:29035"/>
        <label>2</label>
    </ligand>
</feature>
<feature type="binding site" evidence="1">
    <location>
        <position position="292"/>
    </location>
    <ligand>
        <name>Mn(2+)</name>
        <dbReference type="ChEBI" id="CHEBI:29035"/>
        <label>2</label>
    </ligand>
</feature>
<feature type="binding site" evidence="1">
    <location>
        <position position="351"/>
    </location>
    <ligand>
        <name>Mn(2+)</name>
        <dbReference type="ChEBI" id="CHEBI:29035"/>
        <label>1</label>
    </ligand>
</feature>
<feature type="binding site" evidence="1">
    <location>
        <position position="353"/>
    </location>
    <ligand>
        <name>Mn(2+)</name>
        <dbReference type="ChEBI" id="CHEBI:29035"/>
        <label>1</label>
    </ligand>
</feature>
<feature type="binding site" evidence="1">
    <location>
        <position position="353"/>
    </location>
    <ligand>
        <name>Mn(2+)</name>
        <dbReference type="ChEBI" id="CHEBI:29035"/>
        <label>2</label>
    </ligand>
</feature>
<sequence length="502" mass="54734">MEFSVKSGSPEKQRSACIVVGVYEPRRLSGIAEQLDKISEGYISNLLRRGDLEGKPGQMLLLHHVPNVLSERVLLVGCGKERELDERQYKQIITKTINTLNDTGSMEAVCFLTELHVKGRDTYWKVREAVESTQNSLYSFDALKTRKGETRRPLRKLVFNVPTRRELTVGERAIEHGMAVSTGTQLCRDVANMPPNICNPAYLASQARQIAENHENLTVTTVGEEQMAKLGMNSYLAVGRGSHNESVMTVMEYKGAVDSTEKPIVLVGKGLTFDSGGISLKPGEAMDEMKYDMGGAAGVIGTMLALCELKLPINVVGILAGCENMPSSNAYRPGDILTTMSGQTVEVLNTDAEGRLVLCDVLTYVERFDPELVVDTATLTGACVIALGKHASGLFSSHNPLAHELLNAGEQSGDRAWRMPLWDEYQEHLESPFADMTNLGGRPAGAITAACFLSRFAKKYNWAHLDVAGTAWNSGANKGSTGRPVPLLTQFLINRAGVEQGE</sequence>
<accession>A3QBG2</accession>
<gene>
    <name evidence="1" type="primary">pepA</name>
    <name type="ordered locus">Shew_0939</name>
</gene>